<feature type="chain" id="PRO_0000354583" description="Large ribosomal subunit protein uL22c">
    <location>
        <begin position="1"/>
        <end position="170"/>
    </location>
</feature>
<geneLocation type="chloroplast"/>
<sequence>MEPEVEVYALGQHICMSAHKARRVIDQIRGRPYDEILMILELMPYRACYPIFKLVYSAAANATNNKGFNKTALIISQAEVNEGTVVKKLKPRARGRSYPIKRPTCHITIVLQDISKDKNFYIWLRKKGGWIYKEKYIDIREKYEYFLHEALNRGRMEWANSGYEVVWDKK</sequence>
<evidence type="ECO:0000250" key="1"/>
<evidence type="ECO:0000305" key="2"/>
<accession>Q09FS1</accession>
<protein>
    <recommendedName>
        <fullName evidence="2">Large ribosomal subunit protein uL22c</fullName>
    </recommendedName>
    <alternativeName>
        <fullName>50S ribosomal protein L22, chloroplastic</fullName>
    </alternativeName>
</protein>
<organism>
    <name type="scientific">Nandina domestica</name>
    <name type="common">Heavenly bamboo</name>
    <dbReference type="NCBI Taxonomy" id="41776"/>
    <lineage>
        <taxon>Eukaryota</taxon>
        <taxon>Viridiplantae</taxon>
        <taxon>Streptophyta</taxon>
        <taxon>Embryophyta</taxon>
        <taxon>Tracheophyta</taxon>
        <taxon>Spermatophyta</taxon>
        <taxon>Magnoliopsida</taxon>
        <taxon>Ranunculales</taxon>
        <taxon>Berberidaceae</taxon>
        <taxon>Nandinoideae</taxon>
        <taxon>Nandineae</taxon>
        <taxon>Nandina</taxon>
    </lineage>
</organism>
<name>RK22_NANDO</name>
<proteinExistence type="inferred from homology"/>
<dbReference type="EMBL" id="DQ923117">
    <property type="protein sequence ID" value="ABI49904.1"/>
    <property type="molecule type" value="Genomic_DNA"/>
</dbReference>
<dbReference type="RefSeq" id="YP_740690.1">
    <property type="nucleotide sequence ID" value="NC_008336.1"/>
</dbReference>
<dbReference type="SMR" id="Q09FS1"/>
<dbReference type="GeneID" id="4271701"/>
<dbReference type="GO" id="GO:0009507">
    <property type="term" value="C:chloroplast"/>
    <property type="evidence" value="ECO:0007669"/>
    <property type="project" value="UniProtKB-SubCell"/>
</dbReference>
<dbReference type="GO" id="GO:0015934">
    <property type="term" value="C:large ribosomal subunit"/>
    <property type="evidence" value="ECO:0007669"/>
    <property type="project" value="InterPro"/>
</dbReference>
<dbReference type="GO" id="GO:0019843">
    <property type="term" value="F:rRNA binding"/>
    <property type="evidence" value="ECO:0007669"/>
    <property type="project" value="UniProtKB-UniRule"/>
</dbReference>
<dbReference type="GO" id="GO:0003735">
    <property type="term" value="F:structural constituent of ribosome"/>
    <property type="evidence" value="ECO:0007669"/>
    <property type="project" value="InterPro"/>
</dbReference>
<dbReference type="GO" id="GO:0006412">
    <property type="term" value="P:translation"/>
    <property type="evidence" value="ECO:0007669"/>
    <property type="project" value="UniProtKB-UniRule"/>
</dbReference>
<dbReference type="CDD" id="cd00336">
    <property type="entry name" value="Ribosomal_L22"/>
    <property type="match status" value="1"/>
</dbReference>
<dbReference type="FunFam" id="3.90.470.10:FF:000006">
    <property type="entry name" value="50S ribosomal protein L22, chloroplastic"/>
    <property type="match status" value="1"/>
</dbReference>
<dbReference type="Gene3D" id="3.90.470.10">
    <property type="entry name" value="Ribosomal protein L22/L17"/>
    <property type="match status" value="1"/>
</dbReference>
<dbReference type="HAMAP" id="MF_01331_B">
    <property type="entry name" value="Ribosomal_uL22_B"/>
    <property type="match status" value="1"/>
</dbReference>
<dbReference type="InterPro" id="IPR001063">
    <property type="entry name" value="Ribosomal_uL22"/>
</dbReference>
<dbReference type="InterPro" id="IPR005727">
    <property type="entry name" value="Ribosomal_uL22_bac/chlpt-type"/>
</dbReference>
<dbReference type="InterPro" id="IPR047867">
    <property type="entry name" value="Ribosomal_uL22_bac/org-type"/>
</dbReference>
<dbReference type="InterPro" id="IPR018260">
    <property type="entry name" value="Ribosomal_uL22_CS"/>
</dbReference>
<dbReference type="InterPro" id="IPR036394">
    <property type="entry name" value="Ribosomal_uL22_sf"/>
</dbReference>
<dbReference type="NCBIfam" id="TIGR01044">
    <property type="entry name" value="rplV_bact"/>
    <property type="match status" value="1"/>
</dbReference>
<dbReference type="PANTHER" id="PTHR13501">
    <property type="entry name" value="CHLOROPLAST 50S RIBOSOMAL PROTEIN L22-RELATED"/>
    <property type="match status" value="1"/>
</dbReference>
<dbReference type="PANTHER" id="PTHR13501:SF10">
    <property type="entry name" value="LARGE RIBOSOMAL SUBUNIT PROTEIN UL22M"/>
    <property type="match status" value="1"/>
</dbReference>
<dbReference type="Pfam" id="PF00237">
    <property type="entry name" value="Ribosomal_L22"/>
    <property type="match status" value="1"/>
</dbReference>
<dbReference type="SUPFAM" id="SSF54843">
    <property type="entry name" value="Ribosomal protein L22"/>
    <property type="match status" value="1"/>
</dbReference>
<dbReference type="PROSITE" id="PS00464">
    <property type="entry name" value="RIBOSOMAL_L22"/>
    <property type="match status" value="1"/>
</dbReference>
<comment type="function">
    <text evidence="1">This protein binds specifically to 23S rRNA.</text>
</comment>
<comment type="function">
    <text evidence="1">The globular domain of the protein is located near the polypeptide exit tunnel on the outside of the subunit, while an extended beta-hairpin is found that lines the wall of the exit tunnel in the center of the 70S ribosome.</text>
</comment>
<comment type="subunit">
    <text evidence="1">Part of the 50S ribosomal subunit.</text>
</comment>
<comment type="subcellular location">
    <subcellularLocation>
        <location>Plastid</location>
        <location>Chloroplast</location>
    </subcellularLocation>
</comment>
<comment type="similarity">
    <text evidence="2">Belongs to the universal ribosomal protein uL22 family.</text>
</comment>
<reference key="1">
    <citation type="journal article" date="2006" name="BMC Plant Biol.">
        <title>Rapid and accurate pyrosequencing of angiosperm plastid genomes.</title>
        <authorList>
            <person name="Moore M.J."/>
            <person name="Dhingra A."/>
            <person name="Soltis P.S."/>
            <person name="Shaw R."/>
            <person name="Farmerie W.G."/>
            <person name="Folta K.M."/>
            <person name="Soltis D.E."/>
        </authorList>
    </citation>
    <scope>NUCLEOTIDE SEQUENCE [LARGE SCALE GENOMIC DNA]</scope>
</reference>
<keyword id="KW-0150">Chloroplast</keyword>
<keyword id="KW-0934">Plastid</keyword>
<keyword id="KW-0687">Ribonucleoprotein</keyword>
<keyword id="KW-0689">Ribosomal protein</keyword>
<keyword id="KW-0694">RNA-binding</keyword>
<keyword id="KW-0699">rRNA-binding</keyword>
<gene>
    <name type="primary">rpl22</name>
</gene>